<protein>
    <recommendedName>
        <fullName>Glyceraldehyde-3-phosphate dehydrogenase</fullName>
        <shortName>GAPDH</shortName>
        <ecNumber>1.2.1.12</ecNumber>
    </recommendedName>
</protein>
<accession>P56649</accession>
<keyword id="KW-0002">3D-structure</keyword>
<keyword id="KW-0007">Acetylation</keyword>
<keyword id="KW-0963">Cytoplasm</keyword>
<keyword id="KW-0324">Glycolysis</keyword>
<keyword id="KW-0520">NAD</keyword>
<keyword id="KW-0560">Oxidoreductase</keyword>
<evidence type="ECO:0000250" key="1"/>
<evidence type="ECO:0000250" key="2">
    <source>
        <dbReference type="UniProtKB" id="P00357"/>
    </source>
</evidence>
<evidence type="ECO:0000255" key="3">
    <source>
        <dbReference type="PROSITE-ProRule" id="PRU10009"/>
    </source>
</evidence>
<evidence type="ECO:0000269" key="4">
    <source>
    </source>
</evidence>
<evidence type="ECO:0000305" key="5"/>
<evidence type="ECO:0007829" key="6">
    <source>
        <dbReference type="PDB" id="1CRW"/>
    </source>
</evidence>
<evidence type="ECO:0007829" key="7">
    <source>
        <dbReference type="PDB" id="1DSS"/>
    </source>
</evidence>
<proteinExistence type="evidence at protein level"/>
<reference key="1">
    <citation type="journal article" date="1993" name="Arch. Biochem. Biophys.">
        <title>Structure of D-glyceraldehyde-3-phosphate dehydrogenase from Palinurus versicolor carrying the fluorescent NAD derivatives at 2.7-A resolution.</title>
        <authorList>
            <person name="Lin Z.J."/>
            <person name="Li J."/>
            <person name="Zhang F.M."/>
            <person name="Song S.Y."/>
            <person name="Yang J."/>
            <person name="Liang S.J."/>
            <person name="Tsou C.L."/>
        </authorList>
    </citation>
    <scope>X-RAY CRYSTALLOGRAPHY (2.7 ANGSTROMS)</scope>
</reference>
<reference key="2">
    <citation type="journal article" date="1998" name="Acta Crystallogr. D">
        <title>Structure of holo-glyceraldehyde-3-phosphate dehydrogenase from Palinurus versicolor refined at 2-A resolution.</title>
        <authorList>
            <person name="Song S.Y."/>
            <person name="Li J."/>
            <person name="Lin Z.J."/>
        </authorList>
    </citation>
    <scope>X-RAY CRYSTALLOGRAPHY (1.88 ANGSTROMS) IN COMPLEX WITH NAD</scope>
    <source>
        <tissue>Muscle</tissue>
    </source>
</reference>
<feature type="chain" id="PRO_0000145506" description="Glyceraldehyde-3-phosphate dehydrogenase">
    <location>
        <begin position="1"/>
        <end position="333"/>
    </location>
</feature>
<feature type="active site" description="Nucleophile">
    <location>
        <position position="148"/>
    </location>
</feature>
<feature type="binding site" evidence="4">
    <location>
        <begin position="10"/>
        <end position="11"/>
    </location>
    <ligand>
        <name>NAD(+)</name>
        <dbReference type="ChEBI" id="CHEBI:57540"/>
    </ligand>
</feature>
<feature type="binding site" evidence="4">
    <location>
        <position position="31"/>
    </location>
    <ligand>
        <name>NAD(+)</name>
        <dbReference type="ChEBI" id="CHEBI:57540"/>
    </ligand>
</feature>
<feature type="binding site" evidence="1">
    <location>
        <position position="76"/>
    </location>
    <ligand>
        <name>NAD(+)</name>
        <dbReference type="ChEBI" id="CHEBI:57540"/>
    </ligand>
</feature>
<feature type="binding site" evidence="1">
    <location>
        <begin position="147"/>
        <end position="149"/>
    </location>
    <ligand>
        <name>D-glyceraldehyde 3-phosphate</name>
        <dbReference type="ChEBI" id="CHEBI:59776"/>
    </ligand>
</feature>
<feature type="binding site" evidence="1">
    <location>
        <position position="178"/>
    </location>
    <ligand>
        <name>D-glyceraldehyde 3-phosphate</name>
        <dbReference type="ChEBI" id="CHEBI:59776"/>
    </ligand>
</feature>
<feature type="binding site" evidence="1">
    <location>
        <begin position="207"/>
        <end position="208"/>
    </location>
    <ligand>
        <name>D-glyceraldehyde 3-phosphate</name>
        <dbReference type="ChEBI" id="CHEBI:59776"/>
    </ligand>
</feature>
<feature type="binding site" evidence="1">
    <location>
        <position position="230"/>
    </location>
    <ligand>
        <name>D-glyceraldehyde 3-phosphate</name>
        <dbReference type="ChEBI" id="CHEBI:59776"/>
    </ligand>
</feature>
<feature type="binding site" evidence="4">
    <location>
        <position position="312"/>
    </location>
    <ligand>
        <name>NAD(+)</name>
        <dbReference type="ChEBI" id="CHEBI:57540"/>
    </ligand>
</feature>
<feature type="site" description="Activates thiol group during catalysis">
    <location>
        <position position="175"/>
    </location>
</feature>
<feature type="modified residue" description="N-acetylserine" evidence="2">
    <location>
        <position position="1"/>
    </location>
</feature>
<feature type="strand" evidence="7">
    <location>
        <begin position="3"/>
        <end position="6"/>
    </location>
</feature>
<feature type="helix" evidence="7">
    <location>
        <begin position="10"/>
        <end position="22"/>
    </location>
</feature>
<feature type="strand" evidence="7">
    <location>
        <begin position="26"/>
        <end position="30"/>
    </location>
</feature>
<feature type="strand" evidence="6">
    <location>
        <begin position="32"/>
        <end position="34"/>
    </location>
</feature>
<feature type="helix" evidence="7">
    <location>
        <begin position="36"/>
        <end position="44"/>
    </location>
</feature>
<feature type="turn" evidence="7">
    <location>
        <begin position="47"/>
        <end position="49"/>
    </location>
</feature>
<feature type="strand" evidence="7">
    <location>
        <begin position="56"/>
        <end position="59"/>
    </location>
</feature>
<feature type="strand" evidence="7">
    <location>
        <begin position="62"/>
        <end position="65"/>
    </location>
</feature>
<feature type="strand" evidence="7">
    <location>
        <begin position="68"/>
        <end position="73"/>
    </location>
</feature>
<feature type="helix" evidence="7">
    <location>
        <begin position="78"/>
        <end position="80"/>
    </location>
</feature>
<feature type="helix" evidence="7">
    <location>
        <begin position="83"/>
        <end position="86"/>
    </location>
</feature>
<feature type="strand" evidence="7">
    <location>
        <begin position="90"/>
        <end position="93"/>
    </location>
</feature>
<feature type="strand" evidence="7">
    <location>
        <begin position="95"/>
        <end position="97"/>
    </location>
</feature>
<feature type="helix" evidence="7">
    <location>
        <begin position="101"/>
        <end position="104"/>
    </location>
</feature>
<feature type="helix" evidence="7">
    <location>
        <begin position="105"/>
        <end position="108"/>
    </location>
</feature>
<feature type="turn" evidence="7">
    <location>
        <begin position="109"/>
        <end position="111"/>
    </location>
</feature>
<feature type="strand" evidence="7">
    <location>
        <begin position="113"/>
        <end position="119"/>
    </location>
</feature>
<feature type="strand" evidence="7">
    <location>
        <begin position="122"/>
        <end position="124"/>
    </location>
</feature>
<feature type="turn" evidence="7">
    <location>
        <begin position="129"/>
        <end position="131"/>
    </location>
</feature>
<feature type="helix" evidence="7">
    <location>
        <begin position="133"/>
        <end position="135"/>
    </location>
</feature>
<feature type="strand" evidence="7">
    <location>
        <begin position="142"/>
        <end position="144"/>
    </location>
</feature>
<feature type="helix" evidence="7">
    <location>
        <begin position="148"/>
        <end position="164"/>
    </location>
</feature>
<feature type="strand" evidence="7">
    <location>
        <begin position="166"/>
        <end position="175"/>
    </location>
</feature>
<feature type="strand" evidence="7">
    <location>
        <begin position="181"/>
        <end position="185"/>
    </location>
</feature>
<feature type="helix" evidence="7">
    <location>
        <begin position="193"/>
        <end position="195"/>
    </location>
</feature>
<feature type="turn" evidence="7">
    <location>
        <begin position="198"/>
        <end position="200"/>
    </location>
</feature>
<feature type="strand" evidence="7">
    <location>
        <begin position="203"/>
        <end position="205"/>
    </location>
</feature>
<feature type="helix" evidence="7">
    <location>
        <begin position="209"/>
        <end position="216"/>
    </location>
</feature>
<feature type="helix" evidence="7">
    <location>
        <begin position="218"/>
        <end position="220"/>
    </location>
</feature>
<feature type="turn" evidence="7">
    <location>
        <begin position="221"/>
        <end position="223"/>
    </location>
</feature>
<feature type="strand" evidence="7">
    <location>
        <begin position="224"/>
        <end position="230"/>
    </location>
</feature>
<feature type="strand" evidence="7">
    <location>
        <begin position="237"/>
        <end position="247"/>
    </location>
</feature>
<feature type="helix" evidence="7">
    <location>
        <begin position="251"/>
        <end position="263"/>
    </location>
</feature>
<feature type="turn" evidence="7">
    <location>
        <begin position="264"/>
        <end position="269"/>
    </location>
</feature>
<feature type="strand" evidence="7">
    <location>
        <begin position="270"/>
        <end position="273"/>
    </location>
</feature>
<feature type="helix" evidence="7">
    <location>
        <begin position="279"/>
        <end position="282"/>
    </location>
</feature>
<feature type="strand" evidence="7">
    <location>
        <begin position="288"/>
        <end position="292"/>
    </location>
</feature>
<feature type="turn" evidence="7">
    <location>
        <begin position="293"/>
        <end position="295"/>
    </location>
</feature>
<feature type="strand" evidence="7">
    <location>
        <begin position="297"/>
        <end position="300"/>
    </location>
</feature>
<feature type="strand" evidence="7">
    <location>
        <begin position="303"/>
        <end position="310"/>
    </location>
</feature>
<feature type="helix" evidence="7">
    <location>
        <begin position="314"/>
        <end position="331"/>
    </location>
</feature>
<sequence>SKIGINGFGRIGRLVLRAALEMGAQVVAVNDPFIALEYMVYMFKYDSTHGMFKGEVKAEDGALVVDGKKITVFNEMKPENIPWSKAGAEYIVESTGVFTTIEKASAHFKGGAKKVIISAPSADAPMFVCGVNLEKYSKDMKVVSNASCTTNCLAPVAKVLHENFEIVEGLMTTVHAVTATQKTVDGPSAKDWRGGRGAAQNIIPSSTGAAKAVGKVIPELDGKLTGMAFRVPTPNVSVVDLTVRLGKECSYDDIKAAMKAASEGPLQGVLGYTEDDVVSCDFTGDNRSSIFDAKAGIQLSKTFVKVVSWYDNEFGYSQRVIDLIKHMQKVDSA</sequence>
<dbReference type="EC" id="1.2.1.12"/>
<dbReference type="PDB" id="1CRW">
    <property type="method" value="X-ray"/>
    <property type="resolution" value="2.00 A"/>
    <property type="chains" value="G/R=1-333"/>
</dbReference>
<dbReference type="PDB" id="1DSS">
    <property type="method" value="X-ray"/>
    <property type="resolution" value="1.88 A"/>
    <property type="chains" value="G/R=1-333"/>
</dbReference>
<dbReference type="PDB" id="1IHX">
    <property type="method" value="X-ray"/>
    <property type="resolution" value="2.80 A"/>
    <property type="chains" value="A/B/C/D=1-333"/>
</dbReference>
<dbReference type="PDB" id="1IHY">
    <property type="method" value="X-ray"/>
    <property type="resolution" value="3.00 A"/>
    <property type="chains" value="A/B/C/D=1-333"/>
</dbReference>
<dbReference type="PDB" id="1SZJ">
    <property type="method" value="X-ray"/>
    <property type="resolution" value="2.00 A"/>
    <property type="chains" value="G/R=1-333"/>
</dbReference>
<dbReference type="PDBsum" id="1CRW"/>
<dbReference type="PDBsum" id="1DSS"/>
<dbReference type="PDBsum" id="1IHX"/>
<dbReference type="PDBsum" id="1IHY"/>
<dbReference type="PDBsum" id="1SZJ"/>
<dbReference type="SMR" id="P56649"/>
<dbReference type="BRENDA" id="1.2.1.12">
    <property type="organism ID" value="4494"/>
</dbReference>
<dbReference type="SABIO-RK" id="P56649"/>
<dbReference type="UniPathway" id="UPA00109">
    <property type="reaction ID" value="UER00184"/>
</dbReference>
<dbReference type="EvolutionaryTrace" id="P56649"/>
<dbReference type="GO" id="GO:0005829">
    <property type="term" value="C:cytosol"/>
    <property type="evidence" value="ECO:0007669"/>
    <property type="project" value="TreeGrafter"/>
</dbReference>
<dbReference type="GO" id="GO:0004365">
    <property type="term" value="F:glyceraldehyde-3-phosphate dehydrogenase (NAD+) (phosphorylating) activity"/>
    <property type="evidence" value="ECO:0007669"/>
    <property type="project" value="UniProtKB-EC"/>
</dbReference>
<dbReference type="GO" id="GO:0051287">
    <property type="term" value="F:NAD binding"/>
    <property type="evidence" value="ECO:0007669"/>
    <property type="project" value="InterPro"/>
</dbReference>
<dbReference type="GO" id="GO:0050661">
    <property type="term" value="F:NADP binding"/>
    <property type="evidence" value="ECO:0007669"/>
    <property type="project" value="InterPro"/>
</dbReference>
<dbReference type="GO" id="GO:0006006">
    <property type="term" value="P:glucose metabolic process"/>
    <property type="evidence" value="ECO:0007669"/>
    <property type="project" value="InterPro"/>
</dbReference>
<dbReference type="GO" id="GO:0006096">
    <property type="term" value="P:glycolytic process"/>
    <property type="evidence" value="ECO:0007669"/>
    <property type="project" value="UniProtKB-UniPathway"/>
</dbReference>
<dbReference type="CDD" id="cd18126">
    <property type="entry name" value="GAPDH_I_C"/>
    <property type="match status" value="1"/>
</dbReference>
<dbReference type="CDD" id="cd05214">
    <property type="entry name" value="GAPDH_I_N"/>
    <property type="match status" value="1"/>
</dbReference>
<dbReference type="FunFam" id="3.30.360.10:FF:000001">
    <property type="entry name" value="Glyceraldehyde-3-phosphate dehydrogenase"/>
    <property type="match status" value="1"/>
</dbReference>
<dbReference type="FunFam" id="3.40.50.720:FF:000266">
    <property type="entry name" value="Glyceraldehyde-3-phosphate dehydrogenase"/>
    <property type="match status" value="1"/>
</dbReference>
<dbReference type="Gene3D" id="3.30.360.10">
    <property type="entry name" value="Dihydrodipicolinate Reductase, domain 2"/>
    <property type="match status" value="1"/>
</dbReference>
<dbReference type="Gene3D" id="3.40.50.720">
    <property type="entry name" value="NAD(P)-binding Rossmann-like Domain"/>
    <property type="match status" value="1"/>
</dbReference>
<dbReference type="InterPro" id="IPR020831">
    <property type="entry name" value="GlycerAld/Erythrose_P_DH"/>
</dbReference>
<dbReference type="InterPro" id="IPR020830">
    <property type="entry name" value="GlycerAld_3-P_DH_AS"/>
</dbReference>
<dbReference type="InterPro" id="IPR020829">
    <property type="entry name" value="GlycerAld_3-P_DH_cat"/>
</dbReference>
<dbReference type="InterPro" id="IPR020828">
    <property type="entry name" value="GlycerAld_3-P_DH_NAD(P)-bd"/>
</dbReference>
<dbReference type="InterPro" id="IPR006424">
    <property type="entry name" value="Glyceraldehyde-3-P_DH_1"/>
</dbReference>
<dbReference type="InterPro" id="IPR036291">
    <property type="entry name" value="NAD(P)-bd_dom_sf"/>
</dbReference>
<dbReference type="NCBIfam" id="TIGR01534">
    <property type="entry name" value="GAPDH-I"/>
    <property type="match status" value="1"/>
</dbReference>
<dbReference type="PANTHER" id="PTHR10836">
    <property type="entry name" value="GLYCERALDEHYDE 3-PHOSPHATE DEHYDROGENASE"/>
    <property type="match status" value="1"/>
</dbReference>
<dbReference type="PANTHER" id="PTHR10836:SF76">
    <property type="entry name" value="GLYCERALDEHYDE-3-PHOSPHATE DEHYDROGENASE-RELATED"/>
    <property type="match status" value="1"/>
</dbReference>
<dbReference type="Pfam" id="PF02800">
    <property type="entry name" value="Gp_dh_C"/>
    <property type="match status" value="1"/>
</dbReference>
<dbReference type="Pfam" id="PF00044">
    <property type="entry name" value="Gp_dh_N"/>
    <property type="match status" value="1"/>
</dbReference>
<dbReference type="PIRSF" id="PIRSF000149">
    <property type="entry name" value="GAP_DH"/>
    <property type="match status" value="1"/>
</dbReference>
<dbReference type="PRINTS" id="PR00078">
    <property type="entry name" value="G3PDHDRGNASE"/>
</dbReference>
<dbReference type="SMART" id="SM00846">
    <property type="entry name" value="Gp_dh_N"/>
    <property type="match status" value="1"/>
</dbReference>
<dbReference type="SUPFAM" id="SSF55347">
    <property type="entry name" value="Glyceraldehyde-3-phosphate dehydrogenase-like, C-terminal domain"/>
    <property type="match status" value="1"/>
</dbReference>
<dbReference type="SUPFAM" id="SSF51735">
    <property type="entry name" value="NAD(P)-binding Rossmann-fold domains"/>
    <property type="match status" value="1"/>
</dbReference>
<dbReference type="PROSITE" id="PS00071">
    <property type="entry name" value="GAPDH"/>
    <property type="match status" value="1"/>
</dbReference>
<organism>
    <name type="scientific">Panulirus versicolor</name>
    <name type="common">Painted spiny lobster</name>
    <name type="synonym">Palinurus versicolor</name>
    <dbReference type="NCBI Taxonomy" id="150436"/>
    <lineage>
        <taxon>Eukaryota</taxon>
        <taxon>Metazoa</taxon>
        <taxon>Ecdysozoa</taxon>
        <taxon>Arthropoda</taxon>
        <taxon>Crustacea</taxon>
        <taxon>Multicrustacea</taxon>
        <taxon>Malacostraca</taxon>
        <taxon>Eumalacostraca</taxon>
        <taxon>Eucarida</taxon>
        <taxon>Decapoda</taxon>
        <taxon>Pleocyemata</taxon>
        <taxon>Achelata</taxon>
        <taxon>Palinuroidea</taxon>
        <taxon>Palinuridae</taxon>
        <taxon>Panulirus</taxon>
    </lineage>
</organism>
<comment type="catalytic activity">
    <reaction evidence="3">
        <text>D-glyceraldehyde 3-phosphate + phosphate + NAD(+) = (2R)-3-phospho-glyceroyl phosphate + NADH + H(+)</text>
        <dbReference type="Rhea" id="RHEA:10300"/>
        <dbReference type="ChEBI" id="CHEBI:15378"/>
        <dbReference type="ChEBI" id="CHEBI:43474"/>
        <dbReference type="ChEBI" id="CHEBI:57540"/>
        <dbReference type="ChEBI" id="CHEBI:57604"/>
        <dbReference type="ChEBI" id="CHEBI:57945"/>
        <dbReference type="ChEBI" id="CHEBI:59776"/>
        <dbReference type="EC" id="1.2.1.12"/>
    </reaction>
</comment>
<comment type="pathway">
    <text>Carbohydrate degradation; glycolysis; pyruvate from D-glyceraldehyde 3-phosphate: step 1/5.</text>
</comment>
<comment type="subunit">
    <text evidence="4">Homotetramer.</text>
</comment>
<comment type="subcellular location">
    <subcellularLocation>
        <location>Cytoplasm</location>
    </subcellularLocation>
</comment>
<comment type="similarity">
    <text evidence="5">Belongs to the glyceraldehyde-3-phosphate dehydrogenase family.</text>
</comment>
<name>G3P_PANVR</name>